<keyword id="KW-0002">3D-structure</keyword>
<keyword id="KW-0034">Amyloid</keyword>
<keyword id="KW-0067">ATP-binding</keyword>
<keyword id="KW-0963">Cytoplasm</keyword>
<keyword id="KW-0509">mRNA transport</keyword>
<keyword id="KW-0547">Nucleotide-binding</keyword>
<keyword id="KW-0539">Nucleus</keyword>
<keyword id="KW-0597">Phosphoprotein</keyword>
<keyword id="KW-0640">Prion</keyword>
<keyword id="KW-1185">Reference proteome</keyword>
<keyword id="KW-0677">Repeat</keyword>
<keyword id="KW-0813">Transport</keyword>
<name>NEW1_YEAST</name>
<gene>
    <name type="primary">NEW1</name>
    <name type="ordered locus">YPL226W</name>
    <name type="ORF">P1445</name>
</gene>
<sequence length="1196" mass="134331">MPPKKFKDLNSFLDDQPKDPNLVASPFGGYFKNPAADAGSNNASKKSSYQQQRNWKQGGNYQQGGYQSYNSNYNNYNNYNNYNNYNNYNNYNKYNGQGYQKSTYKQSAVTPNQSGTPTPSASTTSLTSLNEKLSNLELTPISQFLSKIPECQSITDCKNQIKLIIEEFGKEGNSTGEKIEEWKIVDVLSKFIKPKNPSLVRESAMLIISNIAQFFSGKPPQEAYLLPFFNVALDCISDKENTVKRAAQHAIDSLLNCFPMEALTCFVLPTILDYLSSGAKWQAKMAALSVVDRIREDSANDLLELTFKDAVPVLTDVATDFKPELAKQGYKTLLDYVSILDNLDLSPRYKLIVDTLQDPSKVPESVKSLSSVTFVAEVTEPSLSLLVPILNRSLNLSSSSQEQLRQTVIVVENLTRLVNNRNEIESFIPLLLPGIQKVVDTASLPEVRELAEKALNVLKEDDEADKENKFSGRLTLEEGRDFLLDHLKDIKADDSCFVKPYMNDETVIKYMSKILTVDSNVNDWKRLEDFLTAVFGGSDSQREFVKQDFIHNLRALFYQEKERADEDEGIEIVNTDFSLAYGSRMLLNKTNLRLLKGHRYGLCGRNGAGKSTLMRAIANGQLDGFPDKDTLRTCFVEHKLQGEEGDLDLVSFIALDEELQSTSREEIAAALESVGFDEERRAQTVGSLSGGWKMKLELARAMLQKADILLLDEPTNHLDVSNVKWLEEYLLEHTDITSLIVSHDSGFLDTVCTDIIHYENKKLAYYKGNLAAFVEQKPEAKSYYTLTDSNAQMRFPPPGILTGVKSNTRAVAKMTDVTFSYPGAQKPSLSHVSCSLSLSSRVACLGPNGAGKSTLIKLLTGELVPNEGKVEKHPNLRIGYIAQHALQHVNEHKEKTANQYLQWRYQFGDDREVLLKESRKISEDEKEMMTKEIDIDDGRGKRAIEAIVGRQKLKKSFQYEVKWKYWKPKYNSWVPKDVLVEHGFEKLVQKFDDHEASREGLGYRELIPSVITKHFEDVGLDSEIANHTPLGSLSGGQLVKVVIAGAMWNNPHLLVLDEPTNYLDRDSLGALAVAIRDWSGGVVMISHNNEFVGALCPEQWIVENGKMVQKGSAQVDQSKFEDGGNADAVGLKASNLAKPSVDDDDSPANIKVKQRKKRLTRNEKKLQAERRRLRYIEWLSSPKGTPKPVDTDDEED</sequence>
<reference key="1">
    <citation type="journal article" date="1997" name="Nature">
        <title>The nucleotide sequence of Saccharomyces cerevisiae chromosome XVI.</title>
        <authorList>
            <person name="Bussey H."/>
            <person name="Storms R.K."/>
            <person name="Ahmed A."/>
            <person name="Albermann K."/>
            <person name="Allen E."/>
            <person name="Ansorge W."/>
            <person name="Araujo R."/>
            <person name="Aparicio A."/>
            <person name="Barrell B.G."/>
            <person name="Badcock K."/>
            <person name="Benes V."/>
            <person name="Botstein D."/>
            <person name="Bowman S."/>
            <person name="Brueckner M."/>
            <person name="Carpenter J."/>
            <person name="Cherry J.M."/>
            <person name="Chung E."/>
            <person name="Churcher C.M."/>
            <person name="Coster F."/>
            <person name="Davis K."/>
            <person name="Davis R.W."/>
            <person name="Dietrich F.S."/>
            <person name="Delius H."/>
            <person name="DiPaolo T."/>
            <person name="Dubois E."/>
            <person name="Duesterhoeft A."/>
            <person name="Duncan M."/>
            <person name="Floeth M."/>
            <person name="Fortin N."/>
            <person name="Friesen J.D."/>
            <person name="Fritz C."/>
            <person name="Goffeau A."/>
            <person name="Hall J."/>
            <person name="Hebling U."/>
            <person name="Heumann K."/>
            <person name="Hilbert H."/>
            <person name="Hillier L.W."/>
            <person name="Hunicke-Smith S."/>
            <person name="Hyman R.W."/>
            <person name="Johnston M."/>
            <person name="Kalman S."/>
            <person name="Kleine K."/>
            <person name="Komp C."/>
            <person name="Kurdi O."/>
            <person name="Lashkari D."/>
            <person name="Lew H."/>
            <person name="Lin A."/>
            <person name="Lin D."/>
            <person name="Louis E.J."/>
            <person name="Marathe R."/>
            <person name="Messenguy F."/>
            <person name="Mewes H.-W."/>
            <person name="Mirtipati S."/>
            <person name="Moestl D."/>
            <person name="Mueller-Auer S."/>
            <person name="Namath A."/>
            <person name="Nentwich U."/>
            <person name="Oefner P."/>
            <person name="Pearson D."/>
            <person name="Petel F.X."/>
            <person name="Pohl T.M."/>
            <person name="Purnelle B."/>
            <person name="Rajandream M.A."/>
            <person name="Rechmann S."/>
            <person name="Rieger M."/>
            <person name="Riles L."/>
            <person name="Roberts D."/>
            <person name="Schaefer M."/>
            <person name="Scharfe M."/>
            <person name="Scherens B."/>
            <person name="Schramm S."/>
            <person name="Schroeder M."/>
            <person name="Sdicu A.-M."/>
            <person name="Tettelin H."/>
            <person name="Urrestarazu L.A."/>
            <person name="Ushinsky S."/>
            <person name="Vierendeels F."/>
            <person name="Vissers S."/>
            <person name="Voss H."/>
            <person name="Walsh S.V."/>
            <person name="Wambutt R."/>
            <person name="Wang Y."/>
            <person name="Wedler E."/>
            <person name="Wedler H."/>
            <person name="Winnett E."/>
            <person name="Zhong W.-W."/>
            <person name="Zollner A."/>
            <person name="Vo D.H."/>
            <person name="Hani J."/>
        </authorList>
    </citation>
    <scope>NUCLEOTIDE SEQUENCE [LARGE SCALE GENOMIC DNA]</scope>
    <source>
        <strain>ATCC 204508 / S288c</strain>
    </source>
</reference>
<reference key="2">
    <citation type="journal article" date="2014" name="G3 (Bethesda)">
        <title>The reference genome sequence of Saccharomyces cerevisiae: Then and now.</title>
        <authorList>
            <person name="Engel S.R."/>
            <person name="Dietrich F.S."/>
            <person name="Fisk D.G."/>
            <person name="Binkley G."/>
            <person name="Balakrishnan R."/>
            <person name="Costanzo M.C."/>
            <person name="Dwight S.S."/>
            <person name="Hitz B.C."/>
            <person name="Karra K."/>
            <person name="Nash R.S."/>
            <person name="Weng S."/>
            <person name="Wong E.D."/>
            <person name="Lloyd P."/>
            <person name="Skrzypek M.S."/>
            <person name="Miyasato S.R."/>
            <person name="Simison M."/>
            <person name="Cherry J.M."/>
        </authorList>
    </citation>
    <scope>GENOME REANNOTATION</scope>
    <source>
        <strain>ATCC 204508 / S288c</strain>
    </source>
</reference>
<reference key="3">
    <citation type="journal article" date="1997" name="Nat. Genet.">
        <title>Complete inventory of the yeast ABC proteins.</title>
        <authorList>
            <person name="Decottignies A."/>
            <person name="Goffeau A."/>
        </authorList>
    </citation>
    <scope>DOMAINS</scope>
    <scope>PREDICTION OF FUNCTION</scope>
</reference>
<reference key="4">
    <citation type="journal article" date="2000" name="Cell">
        <title>Molecular basis of a yeast prion species barrier.</title>
        <authorList>
            <person name="Santoso A."/>
            <person name="Chien P."/>
            <person name="Osherovich L.Z."/>
            <person name="Weissman J.S."/>
        </authorList>
    </citation>
    <scope>IDENTIFICATION AS A PRION-FORMING PROTEIN</scope>
</reference>
<reference key="5">
    <citation type="journal article" date="2001" name="Cell">
        <title>Prions affect the appearance of other prions: the story of [PIN(+)].</title>
        <authorList>
            <person name="Derkatch I.L."/>
            <person name="Bradley M.E."/>
            <person name="Hong J.Y."/>
            <person name="Liebman S.W."/>
        </authorList>
    </citation>
    <scope>PRION FORMATION</scope>
</reference>
<reference key="6">
    <citation type="journal article" date="2001" name="Cell">
        <title>Multiple Gln/Asn-rich prion domains confer susceptibility to induction of the yeast [PSI(+)] prion.</title>
        <authorList>
            <person name="Osherovich L.Z."/>
            <person name="Weissman J.S."/>
        </authorList>
    </citation>
    <scope>DOMAIN</scope>
    <scope>PRION FORMATION</scope>
</reference>
<reference key="7">
    <citation type="journal article" date="2003" name="Nature">
        <title>Global analysis of protein localization in budding yeast.</title>
        <authorList>
            <person name="Huh W.-K."/>
            <person name="Falvo J.V."/>
            <person name="Gerke L.C."/>
            <person name="Carroll A.S."/>
            <person name="Howson R.W."/>
            <person name="Weissman J.S."/>
            <person name="O'Shea E.K."/>
        </authorList>
    </citation>
    <scope>SUBCELLULAR LOCATION [LARGE SCALE ANALYSIS]</scope>
</reference>
<reference key="8">
    <citation type="journal article" date="2003" name="Nature">
        <title>Global analysis of protein expression in yeast.</title>
        <authorList>
            <person name="Ghaemmaghami S."/>
            <person name="Huh W.-K."/>
            <person name="Bower K."/>
            <person name="Howson R.W."/>
            <person name="Belle A."/>
            <person name="Dephoure N."/>
            <person name="O'Shea E.K."/>
            <person name="Weissman J.S."/>
        </authorList>
    </citation>
    <scope>LEVEL OF PROTEIN EXPRESSION [LARGE SCALE ANALYSIS]</scope>
</reference>
<reference key="9">
    <citation type="journal article" date="2005" name="Mol. Cell. Proteomics">
        <title>Quantitative phosphoproteomics applied to the yeast pheromone signaling pathway.</title>
        <authorList>
            <person name="Gruhler A."/>
            <person name="Olsen J.V."/>
            <person name="Mohammed S."/>
            <person name="Mortensen P."/>
            <person name="Faergeman N.J."/>
            <person name="Mann M."/>
            <person name="Jensen O.N."/>
        </authorList>
    </citation>
    <scope>IDENTIFICATION BY MASS SPECTROMETRY [LARGE SCALE ANALYSIS]</scope>
    <source>
        <strain>YAL6B</strain>
    </source>
</reference>
<reference key="10">
    <citation type="journal article" date="2007" name="J. Proteome Res.">
        <title>Large-scale phosphorylation analysis of alpha-factor-arrested Saccharomyces cerevisiae.</title>
        <authorList>
            <person name="Li X."/>
            <person name="Gerber S.A."/>
            <person name="Rudner A.D."/>
            <person name="Beausoleil S.A."/>
            <person name="Haas W."/>
            <person name="Villen J."/>
            <person name="Elias J.E."/>
            <person name="Gygi S.P."/>
        </authorList>
    </citation>
    <scope>PHOSPHORYLATION [LARGE SCALE ANALYSIS] AT THR-1191</scope>
    <scope>IDENTIFICATION BY MASS SPECTROMETRY [LARGE SCALE ANALYSIS]</scope>
    <source>
        <strain>ADR376</strain>
    </source>
</reference>
<reference key="11">
    <citation type="journal article" date="2008" name="Mol. Cell. Proteomics">
        <title>A multidimensional chromatography technology for in-depth phosphoproteome analysis.</title>
        <authorList>
            <person name="Albuquerque C.P."/>
            <person name="Smolka M.B."/>
            <person name="Payne S.H."/>
            <person name="Bafna V."/>
            <person name="Eng J."/>
            <person name="Zhou H."/>
        </authorList>
    </citation>
    <scope>PHOSPHORYLATION [LARGE SCALE ANALYSIS] AT SER-443 AND THR-1191</scope>
    <scope>IDENTIFICATION BY MASS SPECTROMETRY [LARGE SCALE ANALYSIS]</scope>
</reference>
<reference key="12">
    <citation type="journal article" date="2009" name="Science">
        <title>Global analysis of Cdk1 substrate phosphorylation sites provides insights into evolution.</title>
        <authorList>
            <person name="Holt L.J."/>
            <person name="Tuch B.B."/>
            <person name="Villen J."/>
            <person name="Johnson A.D."/>
            <person name="Gygi S.P."/>
            <person name="Morgan D.O."/>
        </authorList>
    </citation>
    <scope>PHOSPHORYLATION [LARGE SCALE ANALYSIS] AT THR-1191</scope>
    <scope>IDENTIFICATION BY MASS SPECTROMETRY [LARGE SCALE ANALYSIS]</scope>
</reference>
<feature type="chain" id="PRO_0000268690" description="[NU+] prion formation protein 1">
    <location>
        <begin position="1"/>
        <end position="1196"/>
    </location>
</feature>
<feature type="domain" description="ABC transporter 1" evidence="3">
    <location>
        <begin position="570"/>
        <end position="786"/>
    </location>
</feature>
<feature type="domain" description="ABC transporter 2" evidence="3">
    <location>
        <begin position="812"/>
        <end position="1129"/>
    </location>
</feature>
<feature type="domain" description="Chromo" evidence="2">
    <location>
        <begin position="942"/>
        <end position="1003"/>
    </location>
</feature>
<feature type="region of interest" description="Disordered" evidence="4">
    <location>
        <begin position="1"/>
        <end position="49"/>
    </location>
</feature>
<feature type="region of interest" description="Disordered" evidence="4">
    <location>
        <begin position="103"/>
        <end position="125"/>
    </location>
</feature>
<feature type="region of interest" description="Disordered" evidence="4">
    <location>
        <begin position="1137"/>
        <end position="1166"/>
    </location>
</feature>
<feature type="region of interest" description="Disordered" evidence="4">
    <location>
        <begin position="1177"/>
        <end position="1196"/>
    </location>
</feature>
<feature type="compositionally biased region" description="Polar residues" evidence="4">
    <location>
        <begin position="39"/>
        <end position="49"/>
    </location>
</feature>
<feature type="compositionally biased region" description="Polar residues" evidence="4">
    <location>
        <begin position="103"/>
        <end position="113"/>
    </location>
</feature>
<feature type="compositionally biased region" description="Low complexity" evidence="4">
    <location>
        <begin position="114"/>
        <end position="125"/>
    </location>
</feature>
<feature type="binding site" evidence="3">
    <location>
        <begin position="604"/>
        <end position="611"/>
    </location>
    <ligand>
        <name>ATP</name>
        <dbReference type="ChEBI" id="CHEBI:30616"/>
        <label>1</label>
    </ligand>
</feature>
<feature type="binding site" evidence="3">
    <location>
        <begin position="846"/>
        <end position="853"/>
    </location>
    <ligand>
        <name>ATP</name>
        <dbReference type="ChEBI" id="CHEBI:30616"/>
        <label>2</label>
    </ligand>
</feature>
<feature type="modified residue" description="Phosphoserine" evidence="11">
    <location>
        <position position="443"/>
    </location>
</feature>
<feature type="modified residue" description="Phosphothreonine" evidence="10 11 12">
    <location>
        <position position="1191"/>
    </location>
</feature>
<organism>
    <name type="scientific">Saccharomyces cerevisiae (strain ATCC 204508 / S288c)</name>
    <name type="common">Baker's yeast</name>
    <dbReference type="NCBI Taxonomy" id="559292"/>
    <lineage>
        <taxon>Eukaryota</taxon>
        <taxon>Fungi</taxon>
        <taxon>Dikarya</taxon>
        <taxon>Ascomycota</taxon>
        <taxon>Saccharomycotina</taxon>
        <taxon>Saccharomycetes</taxon>
        <taxon>Saccharomycetales</taxon>
        <taxon>Saccharomycetaceae</taxon>
        <taxon>Saccharomyces</taxon>
    </lineage>
</organism>
<proteinExistence type="evidence at protein level"/>
<comment type="function">
    <text evidence="1">May be involved in the mRNA export process (By similarity). Forms the [NU+] prion and induces [PSI+] prion formation.</text>
</comment>
<comment type="subcellular location">
    <subcellularLocation>
        <location evidence="6">Cytoplasm</location>
    </subcellularLocation>
    <subcellularLocation>
        <location evidence="1">Nucleus</location>
    </subcellularLocation>
</comment>
<comment type="domain">
    <text evidence="5 8">The N-terminal 153 residues are responsible for the prion properties of NEW1.</text>
</comment>
<comment type="miscellaneous">
    <text evidence="7">Present with 37600 molecules/cell in log phase SD medium.</text>
</comment>
<comment type="similarity">
    <text evidence="9">Belongs to the ABC transporter superfamily. ABCF family. EF3 subfamily.</text>
</comment>
<evidence type="ECO:0000250" key="1"/>
<evidence type="ECO:0000255" key="2">
    <source>
        <dbReference type="PROSITE-ProRule" id="PRU00053"/>
    </source>
</evidence>
<evidence type="ECO:0000255" key="3">
    <source>
        <dbReference type="PROSITE-ProRule" id="PRU00434"/>
    </source>
</evidence>
<evidence type="ECO:0000256" key="4">
    <source>
        <dbReference type="SAM" id="MobiDB-lite"/>
    </source>
</evidence>
<evidence type="ECO:0000269" key="5">
    <source>
    </source>
</evidence>
<evidence type="ECO:0000269" key="6">
    <source>
    </source>
</evidence>
<evidence type="ECO:0000269" key="7">
    <source>
    </source>
</evidence>
<evidence type="ECO:0000269" key="8">
    <source>
    </source>
</evidence>
<evidence type="ECO:0000305" key="9"/>
<evidence type="ECO:0007744" key="10">
    <source>
    </source>
</evidence>
<evidence type="ECO:0007744" key="11">
    <source>
    </source>
</evidence>
<evidence type="ECO:0007744" key="12">
    <source>
    </source>
</evidence>
<dbReference type="EMBL" id="X94561">
    <property type="protein sequence ID" value="CAA64261.1"/>
    <property type="molecule type" value="Genomic_DNA"/>
</dbReference>
<dbReference type="EMBL" id="Z73582">
    <property type="protein sequence ID" value="CAA97941.1"/>
    <property type="molecule type" value="Genomic_DNA"/>
</dbReference>
<dbReference type="EMBL" id="BK006949">
    <property type="protein sequence ID" value="DAA11210.1"/>
    <property type="molecule type" value="Genomic_DNA"/>
</dbReference>
<dbReference type="PIR" id="S65245">
    <property type="entry name" value="S65245"/>
</dbReference>
<dbReference type="RefSeq" id="NP_015098.1">
    <property type="nucleotide sequence ID" value="NM_001184040.1"/>
</dbReference>
<dbReference type="PDB" id="6S47">
    <property type="method" value="EM"/>
    <property type="resolution" value="3.28 A"/>
    <property type="chains" value="Bi=141-1112"/>
</dbReference>
<dbReference type="PDBsum" id="6S47"/>
<dbReference type="EMDB" id="EMD-10098"/>
<dbReference type="SMR" id="Q08972"/>
<dbReference type="BioGRID" id="35959">
    <property type="interactions" value="635"/>
</dbReference>
<dbReference type="DIP" id="DIP-6323N"/>
<dbReference type="FunCoup" id="Q08972">
    <property type="interactions" value="344"/>
</dbReference>
<dbReference type="IntAct" id="Q08972">
    <property type="interactions" value="42"/>
</dbReference>
<dbReference type="MINT" id="Q08972"/>
<dbReference type="STRING" id="4932.YPL226W"/>
<dbReference type="GlyGen" id="Q08972">
    <property type="glycosylation" value="4 sites, 1 O-linked glycan (3 sites)"/>
</dbReference>
<dbReference type="iPTMnet" id="Q08972"/>
<dbReference type="PaxDb" id="4932-YPL226W"/>
<dbReference type="PeptideAtlas" id="Q08972"/>
<dbReference type="EnsemblFungi" id="YPL226W_mRNA">
    <property type="protein sequence ID" value="YPL226W"/>
    <property type="gene ID" value="YPL226W"/>
</dbReference>
<dbReference type="GeneID" id="855875"/>
<dbReference type="KEGG" id="sce:YPL226W"/>
<dbReference type="AGR" id="SGD:S000006147"/>
<dbReference type="SGD" id="S000006147">
    <property type="gene designation" value="NEW1"/>
</dbReference>
<dbReference type="VEuPathDB" id="FungiDB:YPL226W"/>
<dbReference type="eggNOG" id="KOG0062">
    <property type="taxonomic scope" value="Eukaryota"/>
</dbReference>
<dbReference type="eggNOG" id="KOG1242">
    <property type="taxonomic scope" value="Eukaryota"/>
</dbReference>
<dbReference type="HOGENOM" id="CLU_002848_0_1_1"/>
<dbReference type="InParanoid" id="Q08972"/>
<dbReference type="OMA" id="EDHRKFG"/>
<dbReference type="OrthoDB" id="2110130at2759"/>
<dbReference type="BioCyc" id="YEAST:G3O-34115-MONOMER"/>
<dbReference type="Reactome" id="R-SCE-382556">
    <property type="pathway name" value="ABC-family proteins mediated transport"/>
</dbReference>
<dbReference type="BioGRID-ORCS" id="855875">
    <property type="hits" value="7 hits in 10 CRISPR screens"/>
</dbReference>
<dbReference type="CD-CODE" id="E03F929F">
    <property type="entry name" value="Stress granule"/>
</dbReference>
<dbReference type="PRO" id="PR:Q08972"/>
<dbReference type="Proteomes" id="UP000002311">
    <property type="component" value="Chromosome XVI"/>
</dbReference>
<dbReference type="RNAct" id="Q08972">
    <property type="molecule type" value="protein"/>
</dbReference>
<dbReference type="GO" id="GO:0005737">
    <property type="term" value="C:cytoplasm"/>
    <property type="evidence" value="ECO:0000314"/>
    <property type="project" value="SGD"/>
</dbReference>
<dbReference type="GO" id="GO:0005739">
    <property type="term" value="C:mitochondrion"/>
    <property type="evidence" value="ECO:0007005"/>
    <property type="project" value="SGD"/>
</dbReference>
<dbReference type="GO" id="GO:0005634">
    <property type="term" value="C:nucleus"/>
    <property type="evidence" value="ECO:0007669"/>
    <property type="project" value="UniProtKB-SubCell"/>
</dbReference>
<dbReference type="GO" id="GO:0005524">
    <property type="term" value="F:ATP binding"/>
    <property type="evidence" value="ECO:0000318"/>
    <property type="project" value="GO_Central"/>
</dbReference>
<dbReference type="GO" id="GO:0016887">
    <property type="term" value="F:ATP hydrolysis activity"/>
    <property type="evidence" value="ECO:0007669"/>
    <property type="project" value="InterPro"/>
</dbReference>
<dbReference type="GO" id="GO:0003729">
    <property type="term" value="F:mRNA binding"/>
    <property type="evidence" value="ECO:0007005"/>
    <property type="project" value="SGD"/>
</dbReference>
<dbReference type="GO" id="GO:0043022">
    <property type="term" value="F:ribosome binding"/>
    <property type="evidence" value="ECO:0000314"/>
    <property type="project" value="SGD"/>
</dbReference>
<dbReference type="GO" id="GO:0008135">
    <property type="term" value="F:translation factor activity, RNA binding"/>
    <property type="evidence" value="ECO:0007669"/>
    <property type="project" value="UniProtKB-ARBA"/>
</dbReference>
<dbReference type="GO" id="GO:0008079">
    <property type="term" value="F:translation termination factor activity"/>
    <property type="evidence" value="ECO:0000315"/>
    <property type="project" value="SGD"/>
</dbReference>
<dbReference type="GO" id="GO:0051028">
    <property type="term" value="P:mRNA transport"/>
    <property type="evidence" value="ECO:0007669"/>
    <property type="project" value="UniProtKB-KW"/>
</dbReference>
<dbReference type="GO" id="GO:0006449">
    <property type="term" value="P:regulation of translational termination"/>
    <property type="evidence" value="ECO:0000315"/>
    <property type="project" value="SGD"/>
</dbReference>
<dbReference type="GO" id="GO:0042274">
    <property type="term" value="P:ribosomal small subunit biogenesis"/>
    <property type="evidence" value="ECO:0000315"/>
    <property type="project" value="SGD"/>
</dbReference>
<dbReference type="CDD" id="cd03221">
    <property type="entry name" value="ABCF_EF-3"/>
    <property type="match status" value="1"/>
</dbReference>
<dbReference type="CDD" id="cd18626">
    <property type="entry name" value="CD_eEF3"/>
    <property type="match status" value="1"/>
</dbReference>
<dbReference type="FunFam" id="1.25.10.10:FF:000076">
    <property type="entry name" value="Elongation factor 3"/>
    <property type="match status" value="1"/>
</dbReference>
<dbReference type="FunFam" id="2.40.50.990:FF:000002">
    <property type="entry name" value="mRNA export factor elf1"/>
    <property type="match status" value="1"/>
</dbReference>
<dbReference type="FunFam" id="3.40.50.300:FF:000193">
    <property type="entry name" value="Probable Elongation factor 3"/>
    <property type="match status" value="1"/>
</dbReference>
<dbReference type="Gene3D" id="2.40.50.990">
    <property type="match status" value="1"/>
</dbReference>
<dbReference type="Gene3D" id="1.25.10.10">
    <property type="entry name" value="Leucine-rich Repeat Variant"/>
    <property type="match status" value="1"/>
</dbReference>
<dbReference type="Gene3D" id="3.40.50.300">
    <property type="entry name" value="P-loop containing nucleotide triphosphate hydrolases"/>
    <property type="match status" value="2"/>
</dbReference>
<dbReference type="InterPro" id="IPR003593">
    <property type="entry name" value="AAA+_ATPase"/>
</dbReference>
<dbReference type="InterPro" id="IPR003439">
    <property type="entry name" value="ABC_transporter-like_ATP-bd"/>
</dbReference>
<dbReference type="InterPro" id="IPR017871">
    <property type="entry name" value="ABC_transporter-like_CS"/>
</dbReference>
<dbReference type="InterPro" id="IPR050611">
    <property type="entry name" value="ABCF_EF3_subfamily"/>
</dbReference>
<dbReference type="InterPro" id="IPR011989">
    <property type="entry name" value="ARM-like"/>
</dbReference>
<dbReference type="InterPro" id="IPR016024">
    <property type="entry name" value="ARM-type_fold"/>
</dbReference>
<dbReference type="InterPro" id="IPR000953">
    <property type="entry name" value="Chromo/chromo_shadow_dom"/>
</dbReference>
<dbReference type="InterPro" id="IPR023780">
    <property type="entry name" value="Chromo_domain"/>
</dbReference>
<dbReference type="InterPro" id="IPR015688">
    <property type="entry name" value="eEF3_ABC2_chromodomain-like"/>
</dbReference>
<dbReference type="InterPro" id="IPR047038">
    <property type="entry name" value="eEF3_chromodomain-like_sf"/>
</dbReference>
<dbReference type="InterPro" id="IPR056891">
    <property type="entry name" value="NEW1_HB"/>
</dbReference>
<dbReference type="InterPro" id="IPR027417">
    <property type="entry name" value="P-loop_NTPase"/>
</dbReference>
<dbReference type="PANTHER" id="PTHR19211:SF14">
    <property type="entry name" value="ATP-BINDING CASSETTE SUB-FAMILY F MEMBER 1"/>
    <property type="match status" value="1"/>
</dbReference>
<dbReference type="PANTHER" id="PTHR19211">
    <property type="entry name" value="ATP-BINDING TRANSPORT PROTEIN-RELATED"/>
    <property type="match status" value="1"/>
</dbReference>
<dbReference type="Pfam" id="PF00005">
    <property type="entry name" value="ABC_tran"/>
    <property type="match status" value="2"/>
</dbReference>
<dbReference type="Pfam" id="PF00385">
    <property type="entry name" value="Chromo"/>
    <property type="match status" value="1"/>
</dbReference>
<dbReference type="Pfam" id="PF24984">
    <property type="entry name" value="HEAT_EF3_GNC1"/>
    <property type="match status" value="1"/>
</dbReference>
<dbReference type="Pfam" id="PF24987">
    <property type="entry name" value="HEAT_EF3_N"/>
    <property type="match status" value="1"/>
</dbReference>
<dbReference type="Pfam" id="PF24988">
    <property type="entry name" value="NEW1_HB"/>
    <property type="match status" value="1"/>
</dbReference>
<dbReference type="SMART" id="SM00382">
    <property type="entry name" value="AAA"/>
    <property type="match status" value="2"/>
</dbReference>
<dbReference type="SMART" id="SM00298">
    <property type="entry name" value="CHROMO"/>
    <property type="match status" value="1"/>
</dbReference>
<dbReference type="SUPFAM" id="SSF48371">
    <property type="entry name" value="ARM repeat"/>
    <property type="match status" value="1"/>
</dbReference>
<dbReference type="SUPFAM" id="SSF52540">
    <property type="entry name" value="P-loop containing nucleoside triphosphate hydrolases"/>
    <property type="match status" value="2"/>
</dbReference>
<dbReference type="PROSITE" id="PS00211">
    <property type="entry name" value="ABC_TRANSPORTER_1"/>
    <property type="match status" value="2"/>
</dbReference>
<dbReference type="PROSITE" id="PS50893">
    <property type="entry name" value="ABC_TRANSPORTER_2"/>
    <property type="match status" value="2"/>
</dbReference>
<dbReference type="PROSITE" id="PS50013">
    <property type="entry name" value="CHROMO_2"/>
    <property type="match status" value="1"/>
</dbReference>
<protein>
    <recommendedName>
        <fullName>[NU+] prion formation protein 1</fullName>
    </recommendedName>
</protein>
<accession>Q08972</accession>
<accession>D6W3E4</accession>
<accession>Q05402</accession>
<accession>Q7LHP2</accession>